<dbReference type="EMBL" id="CP000111">
    <property type="protein sequence ID" value="ABB49381.1"/>
    <property type="molecule type" value="Genomic_DNA"/>
</dbReference>
<dbReference type="RefSeq" id="WP_011131951.1">
    <property type="nucleotide sequence ID" value="NC_007577.1"/>
</dbReference>
<dbReference type="SMR" id="Q31CL4"/>
<dbReference type="STRING" id="74546.PMT9312_0320"/>
<dbReference type="GeneID" id="60200519"/>
<dbReference type="KEGG" id="pmi:PMT9312_0320"/>
<dbReference type="HOGENOM" id="CLU_217078_1_0_3"/>
<dbReference type="OrthoDB" id="427659at2"/>
<dbReference type="Proteomes" id="UP000002715">
    <property type="component" value="Chromosome"/>
</dbReference>
<dbReference type="GO" id="GO:0009539">
    <property type="term" value="C:photosystem II reaction center"/>
    <property type="evidence" value="ECO:0007669"/>
    <property type="project" value="InterPro"/>
</dbReference>
<dbReference type="GO" id="GO:0031676">
    <property type="term" value="C:plasma membrane-derived thylakoid membrane"/>
    <property type="evidence" value="ECO:0007669"/>
    <property type="project" value="UniProtKB-SubCell"/>
</dbReference>
<dbReference type="GO" id="GO:0015979">
    <property type="term" value="P:photosynthesis"/>
    <property type="evidence" value="ECO:0007669"/>
    <property type="project" value="UniProtKB-UniRule"/>
</dbReference>
<dbReference type="HAMAP" id="MF_00808">
    <property type="entry name" value="PSII_PsbT"/>
    <property type="match status" value="1"/>
</dbReference>
<dbReference type="InterPro" id="IPR001743">
    <property type="entry name" value="PSII_PsbT"/>
</dbReference>
<dbReference type="InterPro" id="IPR037268">
    <property type="entry name" value="PSII_PsbT_sf"/>
</dbReference>
<dbReference type="NCBIfam" id="NF008825">
    <property type="entry name" value="PRK11875.1"/>
    <property type="match status" value="1"/>
</dbReference>
<dbReference type="Pfam" id="PF01405">
    <property type="entry name" value="PsbT"/>
    <property type="match status" value="1"/>
</dbReference>
<dbReference type="SUPFAM" id="SSF161029">
    <property type="entry name" value="Photosystem II reaction center protein T, PsbT"/>
    <property type="match status" value="1"/>
</dbReference>
<evidence type="ECO:0000255" key="1">
    <source>
        <dbReference type="HAMAP-Rule" id="MF_00808"/>
    </source>
</evidence>
<evidence type="ECO:0000305" key="2"/>
<comment type="function">
    <text evidence="1">Found at the monomer-monomer interface of the photosystem II (PS II) dimer, plays a role in assembly and dimerization of PSII. PSII is a light-driven water plastoquinone oxidoreductase, using light energy to abstract electrons from H(2)O, generating a proton gradient subsequently used for ATP formation.</text>
</comment>
<comment type="subunit">
    <text evidence="2">PSII is composed of 1 copy each of membrane proteins PsbA, PsbB, PsbC, PsbD, PsbE, PsbF, PsbH, PsbI, PsbJ, PsbK, PsbL, PsbM, PsbT, PsbX, PsbY, Psb30/Ycf12, peripheral proteins PsbO, CyanoQ (PsbQ), PsbU, PsbV and a large number of cofactors. It forms dimeric complexes.</text>
</comment>
<comment type="subcellular location">
    <subcellularLocation>
        <location evidence="1">Cellular thylakoid membrane</location>
        <topology evidence="1">Single-pass membrane protein</topology>
    </subcellularLocation>
</comment>
<comment type="similarity">
    <text evidence="1">Belongs to the PsbT family.</text>
</comment>
<reference key="1">
    <citation type="journal article" date="2006" name="Science">
        <title>Genomic islands and the ecology and evolution of Prochlorococcus.</title>
        <authorList>
            <person name="Coleman M.L."/>
            <person name="Sullivan M.B."/>
            <person name="Martiny A.C."/>
            <person name="Steglich C."/>
            <person name="Barry K."/>
            <person name="Delong E.F."/>
            <person name="Chisholm S.W."/>
        </authorList>
    </citation>
    <scope>NUCLEOTIDE SEQUENCE [LARGE SCALE GENOMIC DNA]</scope>
    <source>
        <strain>MIT 9312</strain>
    </source>
</reference>
<feature type="chain" id="PRO_1000047096" description="Photosystem II reaction center protein T">
    <location>
        <begin position="1"/>
        <end position="32"/>
    </location>
</feature>
<feature type="transmembrane region" description="Helical" evidence="1">
    <location>
        <begin position="3"/>
        <end position="23"/>
    </location>
</feature>
<gene>
    <name evidence="1" type="primary">psbT</name>
    <name type="ordered locus">PMT9312_0320</name>
</gene>
<proteinExistence type="inferred from homology"/>
<keyword id="KW-0472">Membrane</keyword>
<keyword id="KW-0602">Photosynthesis</keyword>
<keyword id="KW-0604">Photosystem II</keyword>
<keyword id="KW-0793">Thylakoid</keyword>
<keyword id="KW-0812">Transmembrane</keyword>
<keyword id="KW-1133">Transmembrane helix</keyword>
<protein>
    <recommendedName>
        <fullName evidence="1">Photosystem II reaction center protein T</fullName>
        <shortName evidence="1">PSII-T</shortName>
    </recommendedName>
</protein>
<accession>Q31CL4</accession>
<sequence length="32" mass="3690">MEAFAYVLILTLAVVTLFFAVAFRDPPKFDRK</sequence>
<name>PSBT_PROM9</name>
<organism>
    <name type="scientific">Prochlorococcus marinus (strain MIT 9312)</name>
    <dbReference type="NCBI Taxonomy" id="74546"/>
    <lineage>
        <taxon>Bacteria</taxon>
        <taxon>Bacillati</taxon>
        <taxon>Cyanobacteriota</taxon>
        <taxon>Cyanophyceae</taxon>
        <taxon>Synechococcales</taxon>
        <taxon>Prochlorococcaceae</taxon>
        <taxon>Prochlorococcus</taxon>
    </lineage>
</organism>